<evidence type="ECO:0000255" key="1">
    <source>
        <dbReference type="HAMAP-Rule" id="MF_00441"/>
    </source>
</evidence>
<accession>Q3BAQ9</accession>
<organism>
    <name type="scientific">Phalaenopsis aphrodite subsp. formosana</name>
    <name type="common">Moth orchid</name>
    <dbReference type="NCBI Taxonomy" id="308872"/>
    <lineage>
        <taxon>Eukaryota</taxon>
        <taxon>Viridiplantae</taxon>
        <taxon>Streptophyta</taxon>
        <taxon>Embryophyta</taxon>
        <taxon>Tracheophyta</taxon>
        <taxon>Spermatophyta</taxon>
        <taxon>Magnoliopsida</taxon>
        <taxon>Liliopsida</taxon>
        <taxon>Asparagales</taxon>
        <taxon>Orchidaceae</taxon>
        <taxon>Epidendroideae</taxon>
        <taxon>Vandeae</taxon>
        <taxon>Aeridinae</taxon>
        <taxon>Phalaenopsis</taxon>
    </lineage>
</organism>
<gene>
    <name evidence="1" type="primary">psbK</name>
</gene>
<feature type="propeptide" id="PRO_0000276166" evidence="1">
    <location>
        <begin position="1"/>
        <end position="24"/>
    </location>
</feature>
<feature type="chain" id="PRO_0000276167" description="Photosystem II reaction center protein K" evidence="1">
    <location>
        <begin position="25"/>
        <end position="61"/>
    </location>
</feature>
<feature type="transmembrane region" description="Helical" evidence="1">
    <location>
        <begin position="32"/>
        <end position="52"/>
    </location>
</feature>
<proteinExistence type="inferred from homology"/>
<protein>
    <recommendedName>
        <fullName evidence="1">Photosystem II reaction center protein K</fullName>
        <shortName evidence="1">PSII-K</shortName>
    </recommendedName>
</protein>
<geneLocation type="chloroplast"/>
<keyword id="KW-0150">Chloroplast</keyword>
<keyword id="KW-0472">Membrane</keyword>
<keyword id="KW-0602">Photosynthesis</keyword>
<keyword id="KW-0604">Photosystem II</keyword>
<keyword id="KW-0934">Plastid</keyword>
<keyword id="KW-0674">Reaction center</keyword>
<keyword id="KW-0793">Thylakoid</keyword>
<keyword id="KW-0812">Transmembrane</keyword>
<keyword id="KW-1133">Transmembrane helix</keyword>
<sequence length="61" mass="7019">MLNIFCLICICLNSTLYSSSFFFAKLPEAYAFFNPIIDVMPIIPVLFFLLAFVWQAAVSFR</sequence>
<name>PSBK_PHAAO</name>
<comment type="function">
    <text evidence="1">One of the components of the core complex of photosystem II (PSII). PSII is a light-driven water:plastoquinone oxidoreductase that uses light energy to abstract electrons from H(2)O, generating O(2) and a proton gradient subsequently used for ATP formation. It consists of a core antenna complex that captures photons, and an electron transfer chain that converts photonic excitation into a charge separation.</text>
</comment>
<comment type="subunit">
    <text evidence="1">PSII is composed of 1 copy each of membrane proteins PsbA, PsbB, PsbC, PsbD, PsbE, PsbF, PsbH, PsbI, PsbJ, PsbK, PsbL, PsbM, PsbT, PsbX, PsbY, PsbZ, Psb30/Ycf12, at least 3 peripheral proteins of the oxygen-evolving complex and a large number of cofactors. It forms dimeric complexes.</text>
</comment>
<comment type="subcellular location">
    <subcellularLocation>
        <location evidence="1">Plastid</location>
        <location evidence="1">Chloroplast thylakoid membrane</location>
        <topology evidence="1">Single-pass membrane protein</topology>
    </subcellularLocation>
</comment>
<comment type="similarity">
    <text evidence="1">Belongs to the PsbK family.</text>
</comment>
<dbReference type="EMBL" id="AY916449">
    <property type="protein sequence ID" value="AAW82486.1"/>
    <property type="molecule type" value="Genomic_DNA"/>
</dbReference>
<dbReference type="RefSeq" id="YP_358559.1">
    <property type="nucleotide sequence ID" value="NC_007499.1"/>
</dbReference>
<dbReference type="SMR" id="Q3BAQ9"/>
<dbReference type="GeneID" id="3741659"/>
<dbReference type="GO" id="GO:0009535">
    <property type="term" value="C:chloroplast thylakoid membrane"/>
    <property type="evidence" value="ECO:0007669"/>
    <property type="project" value="UniProtKB-SubCell"/>
</dbReference>
<dbReference type="GO" id="GO:0009539">
    <property type="term" value="C:photosystem II reaction center"/>
    <property type="evidence" value="ECO:0007669"/>
    <property type="project" value="InterPro"/>
</dbReference>
<dbReference type="GO" id="GO:0015979">
    <property type="term" value="P:photosynthesis"/>
    <property type="evidence" value="ECO:0007669"/>
    <property type="project" value="UniProtKB-UniRule"/>
</dbReference>
<dbReference type="HAMAP" id="MF_00441">
    <property type="entry name" value="PSII_PsbK"/>
    <property type="match status" value="1"/>
</dbReference>
<dbReference type="InterPro" id="IPR003687">
    <property type="entry name" value="PSII_PsbK"/>
</dbReference>
<dbReference type="InterPro" id="IPR037270">
    <property type="entry name" value="PSII_PsbK_sf"/>
</dbReference>
<dbReference type="NCBIfam" id="NF002715">
    <property type="entry name" value="PRK02553.1"/>
    <property type="match status" value="1"/>
</dbReference>
<dbReference type="PANTHER" id="PTHR35325">
    <property type="match status" value="1"/>
</dbReference>
<dbReference type="PANTHER" id="PTHR35325:SF1">
    <property type="entry name" value="PHOTOSYSTEM II REACTION CENTER PROTEIN K"/>
    <property type="match status" value="1"/>
</dbReference>
<dbReference type="Pfam" id="PF02533">
    <property type="entry name" value="PsbK"/>
    <property type="match status" value="1"/>
</dbReference>
<dbReference type="SUPFAM" id="SSF161037">
    <property type="entry name" value="Photosystem II reaction center protein K, PsbK"/>
    <property type="match status" value="1"/>
</dbReference>
<reference key="1">
    <citation type="journal article" date="2006" name="Mol. Biol. Evol.">
        <title>The chloroplast genome of Phalaenopsis aphrodite (Orchidaceae): comparative analysis of evolutionary rate with that of grasses and its phylogenetic implications.</title>
        <authorList>
            <person name="Chang C.-C."/>
            <person name="Lin H.-C."/>
            <person name="Lin I.-P."/>
            <person name="Chow T.-Y."/>
            <person name="Chen H.-H."/>
            <person name="Chen W.-H."/>
            <person name="Cheng C.-H."/>
            <person name="Lin C.-Y."/>
            <person name="Liu S.-M."/>
            <person name="Chang C.-C."/>
            <person name="Chaw S.-M."/>
        </authorList>
    </citation>
    <scope>NUCLEOTIDE SEQUENCE [LARGE SCALE GENOMIC DNA]</scope>
    <source>
        <strain>cv. Taisugar TS-97</strain>
    </source>
</reference>